<proteinExistence type="evidence at protein level"/>
<protein>
    <recommendedName>
        <fullName>UPF0053 inner membrane protein YoaE</fullName>
    </recommendedName>
</protein>
<sequence>MEFLMDPSIWAGLLTLVVLEIVLGIDNLVFIAILADKLPPKQRDKARLLGLSLALIMRLGLLSLISWMVTLTKPLFTVMDFSFSGRDLIMLFGGIFLLFKATTELHERLENRDHDSGHGKGYASFWVVVTQIVILDAVFSLDAVITAVGMVNHLPVMMAAVVIAMAVMLLASKPLTRFVNQHPTVVVLCLSFLLMIGLSLVAEGFGFHIPKGYLYAAIGFSIIIEVFNQIARRNFIRHQSTLPLRARTADAILRLMGGKRQANVQHDADNPMPMPIPEGAFAEEERYMINGVLTLASRSLRGIMTPRGEISWVDANLGVDEIREQLLSSPHSLFPVCRGELDEIIGIVRAKELLVALEEGVDVAAIASASPAIIVPETLDPINLLGVLRRARGSFVIVTNEFGVVQGLVTPLDVLEAIAGEFPDADETPEIITDGDGWLVKGGTDLHALQQALDVEHLADDDDIATVAGLVISANGHIPRVGDVIDVGPLHITIIEANDYRVDLVRIVKEQPAHDEDE</sequence>
<organism>
    <name type="scientific">Escherichia coli (strain K12)</name>
    <dbReference type="NCBI Taxonomy" id="83333"/>
    <lineage>
        <taxon>Bacteria</taxon>
        <taxon>Pseudomonadati</taxon>
        <taxon>Pseudomonadota</taxon>
        <taxon>Gammaproteobacteria</taxon>
        <taxon>Enterobacterales</taxon>
        <taxon>Enterobacteriaceae</taxon>
        <taxon>Escherichia</taxon>
    </lineage>
</organism>
<evidence type="ECO:0000255" key="1"/>
<evidence type="ECO:0000255" key="2">
    <source>
        <dbReference type="PROSITE-ProRule" id="PRU00703"/>
    </source>
</evidence>
<evidence type="ECO:0000305" key="3"/>
<gene>
    <name type="primary">yoaE</name>
    <name type="ordered locus">b1816</name>
    <name type="ordered locus">JW1805</name>
</gene>
<accession>P0AEC0</accession>
<accession>P76262</accession>
<reference key="1">
    <citation type="journal article" date="1996" name="DNA Res.">
        <title>A 460-kb DNA sequence of the Escherichia coli K-12 genome corresponding to the 40.1-50.0 min region on the linkage map.</title>
        <authorList>
            <person name="Itoh T."/>
            <person name="Aiba H."/>
            <person name="Baba T."/>
            <person name="Fujita K."/>
            <person name="Hayashi K."/>
            <person name="Inada T."/>
            <person name="Isono K."/>
            <person name="Kasai H."/>
            <person name="Kimura S."/>
            <person name="Kitakawa M."/>
            <person name="Kitagawa M."/>
            <person name="Makino K."/>
            <person name="Miki T."/>
            <person name="Mizobuchi K."/>
            <person name="Mori H."/>
            <person name="Mori T."/>
            <person name="Motomura K."/>
            <person name="Nakade S."/>
            <person name="Nakamura Y."/>
            <person name="Nashimoto H."/>
            <person name="Nishio Y."/>
            <person name="Oshima T."/>
            <person name="Saito N."/>
            <person name="Sampei G."/>
            <person name="Seki Y."/>
            <person name="Sivasundaram S."/>
            <person name="Tagami H."/>
            <person name="Takeda J."/>
            <person name="Takemoto K."/>
            <person name="Wada C."/>
            <person name="Yamamoto Y."/>
            <person name="Horiuchi T."/>
        </authorList>
    </citation>
    <scope>NUCLEOTIDE SEQUENCE [LARGE SCALE GENOMIC DNA]</scope>
    <source>
        <strain>K12 / W3110 / ATCC 27325 / DSM 5911</strain>
    </source>
</reference>
<reference key="2">
    <citation type="journal article" date="1997" name="Science">
        <title>The complete genome sequence of Escherichia coli K-12.</title>
        <authorList>
            <person name="Blattner F.R."/>
            <person name="Plunkett G. III"/>
            <person name="Bloch C.A."/>
            <person name="Perna N.T."/>
            <person name="Burland V."/>
            <person name="Riley M."/>
            <person name="Collado-Vides J."/>
            <person name="Glasner J.D."/>
            <person name="Rode C.K."/>
            <person name="Mayhew G.F."/>
            <person name="Gregor J."/>
            <person name="Davis N.W."/>
            <person name="Kirkpatrick H.A."/>
            <person name="Goeden M.A."/>
            <person name="Rose D.J."/>
            <person name="Mau B."/>
            <person name="Shao Y."/>
        </authorList>
    </citation>
    <scope>NUCLEOTIDE SEQUENCE [LARGE SCALE GENOMIC DNA]</scope>
    <source>
        <strain>K12 / MG1655 / ATCC 47076</strain>
    </source>
</reference>
<reference key="3">
    <citation type="journal article" date="2006" name="Mol. Syst. Biol.">
        <title>Highly accurate genome sequences of Escherichia coli K-12 strains MG1655 and W3110.</title>
        <authorList>
            <person name="Hayashi K."/>
            <person name="Morooka N."/>
            <person name="Yamamoto Y."/>
            <person name="Fujita K."/>
            <person name="Isono K."/>
            <person name="Choi S."/>
            <person name="Ohtsubo E."/>
            <person name="Baba T."/>
            <person name="Wanner B.L."/>
            <person name="Mori H."/>
            <person name="Horiuchi T."/>
        </authorList>
    </citation>
    <scope>NUCLEOTIDE SEQUENCE [LARGE SCALE GENOMIC DNA]</scope>
    <source>
        <strain>K12 / W3110 / ATCC 27325 / DSM 5911</strain>
    </source>
</reference>
<reference key="4">
    <citation type="journal article" date="2005" name="Science">
        <title>Global topology analysis of the Escherichia coli inner membrane proteome.</title>
        <authorList>
            <person name="Daley D.O."/>
            <person name="Rapp M."/>
            <person name="Granseth E."/>
            <person name="Melen K."/>
            <person name="Drew D."/>
            <person name="von Heijne G."/>
        </authorList>
    </citation>
    <scope>TOPOLOGY [LARGE SCALE ANALYSIS]</scope>
    <source>
        <strain>K12 / MG1655 / ATCC 47076</strain>
    </source>
</reference>
<comment type="subcellular location">
    <subcellularLocation>
        <location>Cell inner membrane</location>
        <topology>Multi-pass membrane protein</topology>
    </subcellularLocation>
</comment>
<comment type="similarity">
    <text evidence="3">Belongs to the UPF0053 family.</text>
</comment>
<dbReference type="EMBL" id="U00096">
    <property type="protein sequence ID" value="AAC74886.1"/>
    <property type="molecule type" value="Genomic_DNA"/>
</dbReference>
<dbReference type="EMBL" id="AP009048">
    <property type="protein sequence ID" value="BAA15623.1"/>
    <property type="molecule type" value="Genomic_DNA"/>
</dbReference>
<dbReference type="PIR" id="H64942">
    <property type="entry name" value="H64942"/>
</dbReference>
<dbReference type="RefSeq" id="NP_416330.1">
    <property type="nucleotide sequence ID" value="NC_000913.3"/>
</dbReference>
<dbReference type="RefSeq" id="WP_000394983.1">
    <property type="nucleotide sequence ID" value="NZ_STEB01000009.1"/>
</dbReference>
<dbReference type="SMR" id="P0AEC0"/>
<dbReference type="BioGRID" id="4260347">
    <property type="interactions" value="14"/>
</dbReference>
<dbReference type="BioGRID" id="850692">
    <property type="interactions" value="1"/>
</dbReference>
<dbReference type="FunCoup" id="P0AEC0">
    <property type="interactions" value="1"/>
</dbReference>
<dbReference type="IntAct" id="P0AEC0">
    <property type="interactions" value="1"/>
</dbReference>
<dbReference type="STRING" id="511145.b1816"/>
<dbReference type="jPOST" id="P0AEC0"/>
<dbReference type="PaxDb" id="511145-b1816"/>
<dbReference type="EnsemblBacteria" id="AAC74886">
    <property type="protein sequence ID" value="AAC74886"/>
    <property type="gene ID" value="b1816"/>
</dbReference>
<dbReference type="GeneID" id="93776065"/>
<dbReference type="GeneID" id="946335"/>
<dbReference type="KEGG" id="ecj:JW1805"/>
<dbReference type="KEGG" id="eco:b1816"/>
<dbReference type="KEGG" id="ecoc:C3026_10340"/>
<dbReference type="PATRIC" id="fig|511145.12.peg.1893"/>
<dbReference type="EchoBASE" id="EB3290"/>
<dbReference type="eggNOG" id="COG1253">
    <property type="taxonomic scope" value="Bacteria"/>
</dbReference>
<dbReference type="HOGENOM" id="CLU_015237_0_0_6"/>
<dbReference type="InParanoid" id="P0AEC0"/>
<dbReference type="OMA" id="EFGVIQG"/>
<dbReference type="OrthoDB" id="9805314at2"/>
<dbReference type="PhylomeDB" id="P0AEC0"/>
<dbReference type="BioCyc" id="EcoCyc:G6997-MONOMER"/>
<dbReference type="PRO" id="PR:P0AEC0"/>
<dbReference type="Proteomes" id="UP000000625">
    <property type="component" value="Chromosome"/>
</dbReference>
<dbReference type="GO" id="GO:0005886">
    <property type="term" value="C:plasma membrane"/>
    <property type="evidence" value="ECO:0000318"/>
    <property type="project" value="GO_Central"/>
</dbReference>
<dbReference type="GO" id="GO:0050660">
    <property type="term" value="F:flavin adenine dinucleotide binding"/>
    <property type="evidence" value="ECO:0007669"/>
    <property type="project" value="InterPro"/>
</dbReference>
<dbReference type="CDD" id="cd04590">
    <property type="entry name" value="CBS_pair_CorC_HlyC_assoc"/>
    <property type="match status" value="1"/>
</dbReference>
<dbReference type="FunFam" id="3.10.580.10:FF:000008">
    <property type="entry name" value="Integral membrane protein TerC"/>
    <property type="match status" value="1"/>
</dbReference>
<dbReference type="FunFam" id="3.30.465.10:FF:000005">
    <property type="entry name" value="Integral membrane protein TerC"/>
    <property type="match status" value="1"/>
</dbReference>
<dbReference type="Gene3D" id="3.30.465.10">
    <property type="match status" value="1"/>
</dbReference>
<dbReference type="Gene3D" id="3.10.580.10">
    <property type="entry name" value="CBS-domain"/>
    <property type="match status" value="1"/>
</dbReference>
<dbReference type="InterPro" id="IPR000644">
    <property type="entry name" value="CBS_dom"/>
</dbReference>
<dbReference type="InterPro" id="IPR046342">
    <property type="entry name" value="CBS_dom_sf"/>
</dbReference>
<dbReference type="InterPro" id="IPR036318">
    <property type="entry name" value="FAD-bd_PCMH-like_sf"/>
</dbReference>
<dbReference type="InterPro" id="IPR016169">
    <property type="entry name" value="FAD-bd_PCMH_sub2"/>
</dbReference>
<dbReference type="InterPro" id="IPR005496">
    <property type="entry name" value="Integral_membrane_TerC"/>
</dbReference>
<dbReference type="InterPro" id="IPR044751">
    <property type="entry name" value="Ion_transp-like_CBS"/>
</dbReference>
<dbReference type="InterPro" id="IPR005170">
    <property type="entry name" value="Transptr-assoc_dom"/>
</dbReference>
<dbReference type="PANTHER" id="PTHR22777">
    <property type="entry name" value="HEMOLYSIN-RELATED"/>
    <property type="match status" value="1"/>
</dbReference>
<dbReference type="PANTHER" id="PTHR22777:SF15">
    <property type="entry name" value="UPF0053 INNER MEMBRANE PROTEIN YOAE"/>
    <property type="match status" value="1"/>
</dbReference>
<dbReference type="Pfam" id="PF03471">
    <property type="entry name" value="CorC_HlyC"/>
    <property type="match status" value="1"/>
</dbReference>
<dbReference type="Pfam" id="PF03741">
    <property type="entry name" value="TerC"/>
    <property type="match status" value="1"/>
</dbReference>
<dbReference type="SMART" id="SM01091">
    <property type="entry name" value="CorC_HlyC"/>
    <property type="match status" value="1"/>
</dbReference>
<dbReference type="SUPFAM" id="SSF54631">
    <property type="entry name" value="CBS-domain pair"/>
    <property type="match status" value="1"/>
</dbReference>
<dbReference type="SUPFAM" id="SSF56176">
    <property type="entry name" value="FAD-binding/transporter-associated domain-like"/>
    <property type="match status" value="1"/>
</dbReference>
<dbReference type="PROSITE" id="PS51371">
    <property type="entry name" value="CBS"/>
    <property type="match status" value="2"/>
</dbReference>
<name>YOAE_ECOLI</name>
<feature type="chain" id="PRO_0000088359" description="UPF0053 inner membrane protein YoaE">
    <location>
        <begin position="1"/>
        <end position="518"/>
    </location>
</feature>
<feature type="topological domain" description="Cytoplasmic" evidence="1">
    <location>
        <begin position="1"/>
        <end position="13"/>
    </location>
</feature>
<feature type="transmembrane region" description="Helical" evidence="1">
    <location>
        <begin position="14"/>
        <end position="34"/>
    </location>
</feature>
<feature type="topological domain" description="Periplasmic" evidence="1">
    <location>
        <begin position="35"/>
        <end position="48"/>
    </location>
</feature>
<feature type="transmembrane region" description="Helical" evidence="1">
    <location>
        <begin position="49"/>
        <end position="69"/>
    </location>
</feature>
<feature type="topological domain" description="Cytoplasmic" evidence="1">
    <location>
        <begin position="70"/>
        <end position="78"/>
    </location>
</feature>
<feature type="transmembrane region" description="Helical" evidence="1">
    <location>
        <begin position="79"/>
        <end position="99"/>
    </location>
</feature>
<feature type="topological domain" description="Periplasmic" evidence="1">
    <location>
        <begin position="100"/>
        <end position="124"/>
    </location>
</feature>
<feature type="transmembrane region" description="Helical" evidence="1">
    <location>
        <begin position="125"/>
        <end position="145"/>
    </location>
</feature>
<feature type="topological domain" description="Cytoplasmic" evidence="1">
    <location>
        <begin position="146"/>
        <end position="149"/>
    </location>
</feature>
<feature type="transmembrane region" description="Helical" evidence="1">
    <location>
        <begin position="150"/>
        <end position="170"/>
    </location>
</feature>
<feature type="topological domain" description="Periplasmic" evidence="1">
    <location>
        <begin position="171"/>
        <end position="184"/>
    </location>
</feature>
<feature type="transmembrane region" description="Helical" evidence="1">
    <location>
        <begin position="185"/>
        <end position="205"/>
    </location>
</feature>
<feature type="topological domain" description="Cytoplasmic" evidence="1">
    <location>
        <position position="206"/>
    </location>
</feature>
<feature type="transmembrane region" description="Helical" evidence="1">
    <location>
        <begin position="207"/>
        <end position="227"/>
    </location>
</feature>
<feature type="topological domain" description="Periplasmic" evidence="1">
    <location>
        <begin position="228"/>
        <end position="354"/>
    </location>
</feature>
<feature type="transmembrane region" description="Helical" evidence="1">
    <location>
        <begin position="355"/>
        <end position="375"/>
    </location>
</feature>
<feature type="topological domain" description="Cytoplasmic" evidence="1">
    <location>
        <begin position="376"/>
        <end position="518"/>
    </location>
</feature>
<feature type="domain" description="CBS 1" evidence="2">
    <location>
        <begin position="304"/>
        <end position="363"/>
    </location>
</feature>
<feature type="domain" description="CBS 2" evidence="2">
    <location>
        <begin position="367"/>
        <end position="427"/>
    </location>
</feature>
<keyword id="KW-0129">CBS domain</keyword>
<keyword id="KW-0997">Cell inner membrane</keyword>
<keyword id="KW-1003">Cell membrane</keyword>
<keyword id="KW-0472">Membrane</keyword>
<keyword id="KW-1185">Reference proteome</keyword>
<keyword id="KW-0677">Repeat</keyword>
<keyword id="KW-0812">Transmembrane</keyword>
<keyword id="KW-1133">Transmembrane helix</keyword>